<reference key="1">
    <citation type="journal article" date="2008" name="Toxicon">
        <title>Characterization of antimicrobial peptides from the skin secretions of the Malaysian frogs, Odorrana hosii and Hylarana picturata (Anura:Ranidae).</title>
        <authorList>
            <person name="Conlon J.M."/>
            <person name="Kolodziejek J."/>
            <person name="Nowotny N."/>
            <person name="Leprince J."/>
            <person name="Vaudry H."/>
            <person name="Coquet L."/>
            <person name="Jouenne T."/>
            <person name="King J.D."/>
        </authorList>
    </citation>
    <scope>PROTEIN SEQUENCE</scope>
    <scope>FUNCTION</scope>
    <scope>MASS SPECTROMETRY</scope>
    <source>
        <tissue>Skin secretion</tissue>
    </source>
</reference>
<keyword id="KW-0878">Amphibian defense peptide</keyword>
<keyword id="KW-0044">Antibiotic</keyword>
<keyword id="KW-0929">Antimicrobial</keyword>
<keyword id="KW-0903">Direct protein sequencing</keyword>
<keyword id="KW-1015">Disulfide bond</keyword>
<keyword id="KW-0964">Secreted</keyword>
<evidence type="ECO:0000269" key="1">
    <source>
    </source>
</evidence>
<evidence type="ECO:0000305" key="2"/>
<accession>P0C8T0</accession>
<sequence length="33" mass="3365">GLLDTLKNMAINAAKGAGQSVLNTLSCKLSKTC</sequence>
<proteinExistence type="evidence at protein level"/>
<organism>
    <name type="scientific">Odorrana hosii</name>
    <name type="common">Hose's rock frog</name>
    <name type="synonym">Rana hosii</name>
    <dbReference type="NCBI Taxonomy" id="310666"/>
    <lineage>
        <taxon>Eukaryota</taxon>
        <taxon>Metazoa</taxon>
        <taxon>Chordata</taxon>
        <taxon>Craniata</taxon>
        <taxon>Vertebrata</taxon>
        <taxon>Euteleostomi</taxon>
        <taxon>Amphibia</taxon>
        <taxon>Batrachia</taxon>
        <taxon>Anura</taxon>
        <taxon>Neobatrachia</taxon>
        <taxon>Ranoidea</taxon>
        <taxon>Ranidae</taxon>
        <taxon>Odorrana</taxon>
    </lineage>
</organism>
<name>BR2B_ODOHO</name>
<comment type="function">
    <text evidence="1">Has antibacterial activity against the Gram-positive bacterium S.aureus ATCC 25923 and the Gram-negative bacterium E.coli ATCC 25726.</text>
</comment>
<comment type="subcellular location">
    <subcellularLocation>
        <location>Secreted</location>
    </subcellularLocation>
</comment>
<comment type="tissue specificity">
    <text>Expressed by the skin glands.</text>
</comment>
<comment type="mass spectrometry" mass="3360.6" method="MALDI" evidence="1"/>
<comment type="similarity">
    <text evidence="2">Belongs to the frog skin active peptide (FSAP) family. Brevinin subfamily.</text>
</comment>
<protein>
    <recommendedName>
        <fullName>Brevinin-2HSb</fullName>
    </recommendedName>
</protein>
<dbReference type="SMR" id="P0C8T0"/>
<dbReference type="GO" id="GO:0005576">
    <property type="term" value="C:extracellular region"/>
    <property type="evidence" value="ECO:0007669"/>
    <property type="project" value="UniProtKB-SubCell"/>
</dbReference>
<dbReference type="GO" id="GO:0042742">
    <property type="term" value="P:defense response to bacterium"/>
    <property type="evidence" value="ECO:0007669"/>
    <property type="project" value="UniProtKB-KW"/>
</dbReference>
<dbReference type="InterPro" id="IPR012521">
    <property type="entry name" value="Antimicrobial_frog_2"/>
</dbReference>
<dbReference type="Pfam" id="PF08023">
    <property type="entry name" value="Antimicrobial_2"/>
    <property type="match status" value="1"/>
</dbReference>
<feature type="peptide" id="PRO_0000366038" description="Brevinin-2HSb">
    <location>
        <begin position="1"/>
        <end position="33"/>
    </location>
</feature>
<feature type="disulfide bond">
    <location>
        <begin position="27"/>
        <end position="33"/>
    </location>
</feature>